<gene>
    <name type="primary">cas5</name>
    <name type="ordered locus">MJ0382</name>
</gene>
<evidence type="ECO:0000250" key="1"/>
<evidence type="ECO:0000305" key="2"/>
<protein>
    <recommendedName>
        <fullName>CRISPR-associated protein Cas5</fullName>
    </recommendedName>
</protein>
<dbReference type="EMBL" id="L77117">
    <property type="protein sequence ID" value="AAB98378.1"/>
    <property type="molecule type" value="Genomic_DNA"/>
</dbReference>
<dbReference type="PIR" id="F64347">
    <property type="entry name" value="F64347"/>
</dbReference>
<dbReference type="SMR" id="Q57827"/>
<dbReference type="STRING" id="243232.MJ_0382"/>
<dbReference type="PaxDb" id="243232-MJ_0382"/>
<dbReference type="EnsemblBacteria" id="AAB98378">
    <property type="protein sequence ID" value="AAB98378"/>
    <property type="gene ID" value="MJ_0382"/>
</dbReference>
<dbReference type="KEGG" id="mja:MJ_0382"/>
<dbReference type="eggNOG" id="arCOG02672">
    <property type="taxonomic scope" value="Archaea"/>
</dbReference>
<dbReference type="HOGENOM" id="CLU_1056094_0_0_2"/>
<dbReference type="InParanoid" id="Q57827"/>
<dbReference type="Proteomes" id="UP000000805">
    <property type="component" value="Chromosome"/>
</dbReference>
<dbReference type="GO" id="GO:0051607">
    <property type="term" value="P:defense response to virus"/>
    <property type="evidence" value="ECO:0007669"/>
    <property type="project" value="UniProtKB-KW"/>
</dbReference>
<dbReference type="GO" id="GO:0043571">
    <property type="term" value="P:maintenance of CRISPR repeat elements"/>
    <property type="evidence" value="ECO:0007669"/>
    <property type="project" value="InterPro"/>
</dbReference>
<dbReference type="CDD" id="cd09753">
    <property type="entry name" value="Cas5_I-A"/>
    <property type="match status" value="1"/>
</dbReference>
<dbReference type="Gene3D" id="3.30.70.3120">
    <property type="match status" value="1"/>
</dbReference>
<dbReference type="InterPro" id="IPR021124">
    <property type="entry name" value="CRISPR-assoc_prot_Cas5"/>
</dbReference>
<dbReference type="InterPro" id="IPR013422">
    <property type="entry name" value="CRISPR-assoc_prot_Cas5_N"/>
</dbReference>
<dbReference type="InterPro" id="IPR010153">
    <property type="entry name" value="CRISPR-assoc_prot_Cas5a-typ"/>
</dbReference>
<dbReference type="InterPro" id="IPR053725">
    <property type="entry name" value="CRISPR_Cas5_sf"/>
</dbReference>
<dbReference type="NCBIfam" id="TIGR01874">
    <property type="entry name" value="cas_cas5a"/>
    <property type="match status" value="1"/>
</dbReference>
<dbReference type="NCBIfam" id="TIGR02593">
    <property type="entry name" value="CRISPR_cas5"/>
    <property type="match status" value="1"/>
</dbReference>
<dbReference type="Pfam" id="PF09704">
    <property type="entry name" value="Cas_Cas5d"/>
    <property type="match status" value="1"/>
</dbReference>
<feature type="chain" id="PRO_0000106845" description="CRISPR-associated protein Cas5">
    <location>
        <begin position="1"/>
        <end position="245"/>
    </location>
</feature>
<organism>
    <name type="scientific">Methanocaldococcus jannaschii (strain ATCC 43067 / DSM 2661 / JAL-1 / JCM 10045 / NBRC 100440)</name>
    <name type="common">Methanococcus jannaschii</name>
    <dbReference type="NCBI Taxonomy" id="243232"/>
    <lineage>
        <taxon>Archaea</taxon>
        <taxon>Methanobacteriati</taxon>
        <taxon>Methanobacteriota</taxon>
        <taxon>Methanomada group</taxon>
        <taxon>Methanococci</taxon>
        <taxon>Methanococcales</taxon>
        <taxon>Methanocaldococcaceae</taxon>
        <taxon>Methanocaldococcus</taxon>
    </lineage>
</organism>
<name>CAS5_METJA</name>
<reference key="1">
    <citation type="journal article" date="1996" name="Science">
        <title>Complete genome sequence of the methanogenic archaeon, Methanococcus jannaschii.</title>
        <authorList>
            <person name="Bult C.J."/>
            <person name="White O."/>
            <person name="Olsen G.J."/>
            <person name="Zhou L."/>
            <person name="Fleischmann R.D."/>
            <person name="Sutton G.G."/>
            <person name="Blake J.A."/>
            <person name="FitzGerald L.M."/>
            <person name="Clayton R.A."/>
            <person name="Gocayne J.D."/>
            <person name="Kerlavage A.R."/>
            <person name="Dougherty B.A."/>
            <person name="Tomb J.-F."/>
            <person name="Adams M.D."/>
            <person name="Reich C.I."/>
            <person name="Overbeek R."/>
            <person name="Kirkness E.F."/>
            <person name="Weinstock K.G."/>
            <person name="Merrick J.M."/>
            <person name="Glodek A."/>
            <person name="Scott J.L."/>
            <person name="Geoghagen N.S.M."/>
            <person name="Weidman J.F."/>
            <person name="Fuhrmann J.L."/>
            <person name="Nguyen D."/>
            <person name="Utterback T.R."/>
            <person name="Kelley J.M."/>
            <person name="Peterson J.D."/>
            <person name="Sadow P.W."/>
            <person name="Hanna M.C."/>
            <person name="Cotton M.D."/>
            <person name="Roberts K.M."/>
            <person name="Hurst M.A."/>
            <person name="Kaine B.P."/>
            <person name="Borodovsky M."/>
            <person name="Klenk H.-P."/>
            <person name="Fraser C.M."/>
            <person name="Smith H.O."/>
            <person name="Woese C.R."/>
            <person name="Venter J.C."/>
        </authorList>
    </citation>
    <scope>NUCLEOTIDE SEQUENCE [LARGE SCALE GENOMIC DNA]</scope>
    <source>
        <strain>ATCC 43067 / DSM 2661 / JAL-1 / JCM 10045 / NBRC 100440</strain>
    </source>
</reference>
<accession>Q57827</accession>
<comment type="function">
    <text evidence="1">CRISPR (clustered regularly interspaced short palindromic repeat) is an adaptive immune system that provides protection against mobile genetic elements (viruses, transposable elements and conjugative plasmids). CRISPR clusters contain spacers, sequences complementary to antecedent mobile elements, and target invading nucleic acids. CRISPR clusters are transcribed and processed into CRISPR RNA (crRNA) (By similarity).</text>
</comment>
<comment type="similarity">
    <text evidence="2">Belongs to the CRISPR-associated protein Cas5 family. Subtype I-A/Apern subfamily.</text>
</comment>
<sequence>MIMEALVALLRFPFYSFGKQSYQVRQSLLLPSPSALKGALAKGIILLGGKKGKSLDEIAKKTVEELENKLIYVGAKPYKSSIIKTPILLKRLRNLEDQKNPEKSDAMRREYVFAREILAIYVFRRKLSEEEKDLMLKAVYLIDQLGDTECVGNVIKTEWVEVKEEKAPLKTYVKFKKVSKMSINGGIIENMLETPNFGNKVKEEPYLLPLIEKRYRRSSYYVESDRIFDGNYKIIAFDEVIGLWI</sequence>
<proteinExistence type="inferred from homology"/>
<keyword id="KW-0051">Antiviral defense</keyword>
<keyword id="KW-1185">Reference proteome</keyword>